<feature type="chain" id="PRO_0000124601" description="Putative methylglyoxal reductase DkgA">
    <location>
        <begin position="1"/>
        <end position="275"/>
    </location>
</feature>
<feature type="active site" description="Proton donor" evidence="1">
    <location>
        <position position="51"/>
    </location>
</feature>
<feature type="binding site" evidence="1">
    <location>
        <position position="107"/>
    </location>
    <ligand>
        <name>substrate</name>
    </ligand>
</feature>
<feature type="binding site" evidence="1">
    <location>
        <begin position="187"/>
        <end position="241"/>
    </location>
    <ligand>
        <name>NADP(+)</name>
        <dbReference type="ChEBI" id="CHEBI:58349"/>
    </ligand>
</feature>
<organism>
    <name type="scientific">Salmonella typhi</name>
    <dbReference type="NCBI Taxonomy" id="90370"/>
    <lineage>
        <taxon>Bacteria</taxon>
        <taxon>Pseudomonadati</taxon>
        <taxon>Pseudomonadota</taxon>
        <taxon>Gammaproteobacteria</taxon>
        <taxon>Enterobacterales</taxon>
        <taxon>Enterobacteriaceae</taxon>
        <taxon>Salmonella</taxon>
    </lineage>
</organism>
<name>DKGA_SALTI</name>
<reference key="1">
    <citation type="journal article" date="2001" name="Nature">
        <title>Complete genome sequence of a multiple drug resistant Salmonella enterica serovar Typhi CT18.</title>
        <authorList>
            <person name="Parkhill J."/>
            <person name="Dougan G."/>
            <person name="James K.D."/>
            <person name="Thomson N.R."/>
            <person name="Pickard D."/>
            <person name="Wain J."/>
            <person name="Churcher C.M."/>
            <person name="Mungall K.L."/>
            <person name="Bentley S.D."/>
            <person name="Holden M.T.G."/>
            <person name="Sebaihia M."/>
            <person name="Baker S."/>
            <person name="Basham D."/>
            <person name="Brooks K."/>
            <person name="Chillingworth T."/>
            <person name="Connerton P."/>
            <person name="Cronin A."/>
            <person name="Davis P."/>
            <person name="Davies R.M."/>
            <person name="Dowd L."/>
            <person name="White N."/>
            <person name="Farrar J."/>
            <person name="Feltwell T."/>
            <person name="Hamlin N."/>
            <person name="Haque A."/>
            <person name="Hien T.T."/>
            <person name="Holroyd S."/>
            <person name="Jagels K."/>
            <person name="Krogh A."/>
            <person name="Larsen T.S."/>
            <person name="Leather S."/>
            <person name="Moule S."/>
            <person name="O'Gaora P."/>
            <person name="Parry C."/>
            <person name="Quail M.A."/>
            <person name="Rutherford K.M."/>
            <person name="Simmonds M."/>
            <person name="Skelton J."/>
            <person name="Stevens K."/>
            <person name="Whitehead S."/>
            <person name="Barrell B.G."/>
        </authorList>
    </citation>
    <scope>NUCLEOTIDE SEQUENCE [LARGE SCALE GENOMIC DNA]</scope>
    <source>
        <strain>CT18</strain>
    </source>
</reference>
<reference key="2">
    <citation type="journal article" date="2003" name="J. Bacteriol.">
        <title>Comparative genomics of Salmonella enterica serovar Typhi strains Ty2 and CT18.</title>
        <authorList>
            <person name="Deng W."/>
            <person name="Liou S.-R."/>
            <person name="Plunkett G. III"/>
            <person name="Mayhew G.F."/>
            <person name="Rose D.J."/>
            <person name="Burland V."/>
            <person name="Kodoyianni V."/>
            <person name="Schwartz D.C."/>
            <person name="Blattner F.R."/>
        </authorList>
    </citation>
    <scope>NUCLEOTIDE SEQUENCE [LARGE SCALE GENOMIC DNA]</scope>
    <source>
        <strain>ATCC 700931 / Ty2</strain>
    </source>
</reference>
<gene>
    <name evidence="2" type="primary">dkgA</name>
    <name type="ordered locus">STY3338</name>
    <name type="ordered locus">t3085</name>
</gene>
<protein>
    <recommendedName>
        <fullName evidence="2">Putative methylglyoxal reductase DkgA</fullName>
        <ecNumber evidence="2">1.1.1.-</ecNumber>
    </recommendedName>
</protein>
<keyword id="KW-0963">Cytoplasm</keyword>
<keyword id="KW-0521">NADP</keyword>
<keyword id="KW-0560">Oxidoreductase</keyword>
<accession>P58744</accession>
<sequence>MANPTIIRLQDGNVMPQLGLGVWKASNEEVIAAIHKALEVGYRSIDTATAYQNEEGVGKALKAASVAREELFITTKLWNDDQKRPREALQESLKKLQLDYLDLYLMHWPVPAIDHYVDAWKGMIALQKEGLVKSIGVCNFQIHHLQRLIDETGVPPVINQIELHPLMQQRQLHAWNATHKIQTESWSPLAQGGEGVFDQKVIRELADKYGKTPAQIVIRWHLDCGLVVIPKSVTPSRIAENFAVWDFRLDKDELGEIAKLDQGKRLGPDPDQSGG</sequence>
<proteinExistence type="uncertain"/>
<dbReference type="EC" id="1.1.1.-" evidence="2"/>
<dbReference type="EMBL" id="AL513382">
    <property type="status" value="NOT_ANNOTATED_CDS"/>
    <property type="molecule type" value="Genomic_DNA"/>
</dbReference>
<dbReference type="EMBL" id="AE014613">
    <property type="status" value="NOT_ANNOTATED_CDS"/>
    <property type="molecule type" value="Genomic_DNA"/>
</dbReference>
<dbReference type="SMR" id="P58744"/>
<dbReference type="OMA" id="YCLQKNW"/>
<dbReference type="Proteomes" id="UP000000541">
    <property type="component" value="Chromosome"/>
</dbReference>
<dbReference type="Proteomes" id="UP000002670">
    <property type="component" value="Chromosome"/>
</dbReference>
<dbReference type="GO" id="GO:0005737">
    <property type="term" value="C:cytoplasm"/>
    <property type="evidence" value="ECO:0007669"/>
    <property type="project" value="UniProtKB-SubCell"/>
</dbReference>
<dbReference type="GO" id="GO:0004033">
    <property type="term" value="F:aldo-keto reductase (NADPH) activity"/>
    <property type="evidence" value="ECO:0007669"/>
    <property type="project" value="TreeGrafter"/>
</dbReference>
<dbReference type="GO" id="GO:0019853">
    <property type="term" value="P:L-ascorbic acid biosynthetic process"/>
    <property type="evidence" value="ECO:0007669"/>
    <property type="project" value="UniProtKB-KW"/>
</dbReference>
<dbReference type="FunFam" id="3.20.20.100:FF:000002">
    <property type="entry name" value="2,5-diketo-D-gluconic acid reductase A"/>
    <property type="match status" value="1"/>
</dbReference>
<dbReference type="Gene3D" id="3.20.20.100">
    <property type="entry name" value="NADP-dependent oxidoreductase domain"/>
    <property type="match status" value="1"/>
</dbReference>
<dbReference type="InterPro" id="IPR020471">
    <property type="entry name" value="AKR"/>
</dbReference>
<dbReference type="InterPro" id="IPR018170">
    <property type="entry name" value="Aldo/ket_reductase_CS"/>
</dbReference>
<dbReference type="InterPro" id="IPR023210">
    <property type="entry name" value="NADP_OxRdtase_dom"/>
</dbReference>
<dbReference type="InterPro" id="IPR036812">
    <property type="entry name" value="NADP_OxRdtase_dom_sf"/>
</dbReference>
<dbReference type="NCBIfam" id="NF008598">
    <property type="entry name" value="PRK11565.1"/>
    <property type="match status" value="1"/>
</dbReference>
<dbReference type="PANTHER" id="PTHR43827">
    <property type="entry name" value="2,5-DIKETO-D-GLUCONIC ACID REDUCTASE"/>
    <property type="match status" value="1"/>
</dbReference>
<dbReference type="PANTHER" id="PTHR43827:SF3">
    <property type="entry name" value="NADP-DEPENDENT OXIDOREDUCTASE DOMAIN-CONTAINING PROTEIN"/>
    <property type="match status" value="1"/>
</dbReference>
<dbReference type="Pfam" id="PF00248">
    <property type="entry name" value="Aldo_ket_red"/>
    <property type="match status" value="1"/>
</dbReference>
<dbReference type="PIRSF" id="PIRSF000097">
    <property type="entry name" value="AKR"/>
    <property type="match status" value="1"/>
</dbReference>
<dbReference type="PRINTS" id="PR00069">
    <property type="entry name" value="ALDKETRDTASE"/>
</dbReference>
<dbReference type="SUPFAM" id="SSF51430">
    <property type="entry name" value="NAD(P)-linked oxidoreductase"/>
    <property type="match status" value="1"/>
</dbReference>
<dbReference type="PROSITE" id="PS00798">
    <property type="entry name" value="ALDOKETO_REDUCTASE_1"/>
    <property type="match status" value="1"/>
</dbReference>
<dbReference type="PROSITE" id="PS00062">
    <property type="entry name" value="ALDOKETO_REDUCTASE_2"/>
    <property type="match status" value="1"/>
</dbReference>
<dbReference type="PROSITE" id="PS00063">
    <property type="entry name" value="ALDOKETO_REDUCTASE_3"/>
    <property type="match status" value="1"/>
</dbReference>
<evidence type="ECO:0000250" key="1"/>
<evidence type="ECO:0000250" key="2">
    <source>
        <dbReference type="UniProtKB" id="Q46857"/>
    </source>
</evidence>
<evidence type="ECO:0000305" key="3"/>
<comment type="function">
    <text evidence="2">Aldo-keto reductase that significantly contributes to cellular methylglyoxal detoxification by catalyzing the NADPH-dependent conversion of methylglyoxal to acetol.</text>
</comment>
<comment type="catalytic activity">
    <reaction evidence="2">
        <text>hydroxyacetone + NADP(+) = methylglyoxal + NADPH + H(+)</text>
        <dbReference type="Rhea" id="RHEA:27986"/>
        <dbReference type="ChEBI" id="CHEBI:15378"/>
        <dbReference type="ChEBI" id="CHEBI:17158"/>
        <dbReference type="ChEBI" id="CHEBI:27957"/>
        <dbReference type="ChEBI" id="CHEBI:57783"/>
        <dbReference type="ChEBI" id="CHEBI:58349"/>
    </reaction>
</comment>
<comment type="subunit">
    <text evidence="2">Monomer.</text>
</comment>
<comment type="subcellular location">
    <subcellularLocation>
        <location evidence="3">Cytoplasm</location>
    </subcellularLocation>
</comment>
<comment type="similarity">
    <text evidence="3">Belongs to the aldo/keto reductase family.</text>
</comment>
<comment type="caution">
    <text evidence="3">Could be the product of a pseudogene. This sequence is interrupted by a stop codon.</text>
</comment>
<comment type="sequence caution" evidence="3">
    <conflict type="erroneous termination">
        <sequence resource="EMBL" id="AE014613"/>
    </conflict>
    <text>Truncated C-terminus.</text>
</comment>
<comment type="sequence caution" evidence="3">
    <conflict type="erroneous termination">
        <sequence resource="EMBL" id="AL513382"/>
    </conflict>
    <text>Truncated C-terminus.</text>
</comment>